<name>RL15_VIBA3</name>
<proteinExistence type="inferred from homology"/>
<sequence length="144" mass="14908">MRLNTLSPAAGSKPSKKRVGRGIGSGLGKTGGRGHKGQKSRSGGSVRPGFEGGQMPLKQRLPKFGFTSRKSLVSAEVRLAELAKVTGDVVDLNSLKAANVITKNIEFVKIVLSGDLSKAVTVKGLRVTKGAKAAIEAAGGKIEE</sequence>
<feature type="chain" id="PRO_1000166325" description="Large ribosomal subunit protein uL15">
    <location>
        <begin position="1"/>
        <end position="144"/>
    </location>
</feature>
<feature type="region of interest" description="Disordered" evidence="2">
    <location>
        <begin position="1"/>
        <end position="58"/>
    </location>
</feature>
<feature type="compositionally biased region" description="Gly residues" evidence="2">
    <location>
        <begin position="21"/>
        <end position="31"/>
    </location>
</feature>
<gene>
    <name evidence="1" type="primary">rplO</name>
    <name type="ordered locus">VS_2812</name>
</gene>
<comment type="function">
    <text evidence="1">Binds to the 23S rRNA.</text>
</comment>
<comment type="subunit">
    <text evidence="1">Part of the 50S ribosomal subunit.</text>
</comment>
<comment type="similarity">
    <text evidence="1">Belongs to the universal ribosomal protein uL15 family.</text>
</comment>
<keyword id="KW-0687">Ribonucleoprotein</keyword>
<keyword id="KW-0689">Ribosomal protein</keyword>
<keyword id="KW-0694">RNA-binding</keyword>
<keyword id="KW-0699">rRNA-binding</keyword>
<dbReference type="EMBL" id="FM954972">
    <property type="protein sequence ID" value="CAV20103.1"/>
    <property type="molecule type" value="Genomic_DNA"/>
</dbReference>
<dbReference type="SMR" id="B7VLD8"/>
<dbReference type="STRING" id="575788.VS_2812"/>
<dbReference type="KEGG" id="vsp:VS_2812"/>
<dbReference type="eggNOG" id="COG0200">
    <property type="taxonomic scope" value="Bacteria"/>
</dbReference>
<dbReference type="HOGENOM" id="CLU_055188_4_2_6"/>
<dbReference type="Proteomes" id="UP000009100">
    <property type="component" value="Chromosome 1"/>
</dbReference>
<dbReference type="GO" id="GO:0022625">
    <property type="term" value="C:cytosolic large ribosomal subunit"/>
    <property type="evidence" value="ECO:0007669"/>
    <property type="project" value="TreeGrafter"/>
</dbReference>
<dbReference type="GO" id="GO:0019843">
    <property type="term" value="F:rRNA binding"/>
    <property type="evidence" value="ECO:0007669"/>
    <property type="project" value="UniProtKB-UniRule"/>
</dbReference>
<dbReference type="GO" id="GO:0003735">
    <property type="term" value="F:structural constituent of ribosome"/>
    <property type="evidence" value="ECO:0007669"/>
    <property type="project" value="InterPro"/>
</dbReference>
<dbReference type="GO" id="GO:0006412">
    <property type="term" value="P:translation"/>
    <property type="evidence" value="ECO:0007669"/>
    <property type="project" value="UniProtKB-UniRule"/>
</dbReference>
<dbReference type="FunFam" id="3.100.10.10:FF:000003">
    <property type="entry name" value="50S ribosomal protein L15"/>
    <property type="match status" value="1"/>
</dbReference>
<dbReference type="Gene3D" id="3.100.10.10">
    <property type="match status" value="1"/>
</dbReference>
<dbReference type="HAMAP" id="MF_01341">
    <property type="entry name" value="Ribosomal_uL15"/>
    <property type="match status" value="1"/>
</dbReference>
<dbReference type="InterPro" id="IPR030878">
    <property type="entry name" value="Ribosomal_uL15"/>
</dbReference>
<dbReference type="InterPro" id="IPR021131">
    <property type="entry name" value="Ribosomal_uL15/eL18"/>
</dbReference>
<dbReference type="InterPro" id="IPR036227">
    <property type="entry name" value="Ribosomal_uL15/eL18_sf"/>
</dbReference>
<dbReference type="InterPro" id="IPR005749">
    <property type="entry name" value="Ribosomal_uL15_bac-type"/>
</dbReference>
<dbReference type="InterPro" id="IPR001196">
    <property type="entry name" value="Ribosomal_uL15_CS"/>
</dbReference>
<dbReference type="NCBIfam" id="TIGR01071">
    <property type="entry name" value="rplO_bact"/>
    <property type="match status" value="1"/>
</dbReference>
<dbReference type="PANTHER" id="PTHR12934">
    <property type="entry name" value="50S RIBOSOMAL PROTEIN L15"/>
    <property type="match status" value="1"/>
</dbReference>
<dbReference type="PANTHER" id="PTHR12934:SF11">
    <property type="entry name" value="LARGE RIBOSOMAL SUBUNIT PROTEIN UL15M"/>
    <property type="match status" value="1"/>
</dbReference>
<dbReference type="Pfam" id="PF00828">
    <property type="entry name" value="Ribosomal_L27A"/>
    <property type="match status" value="1"/>
</dbReference>
<dbReference type="SUPFAM" id="SSF52080">
    <property type="entry name" value="Ribosomal proteins L15p and L18e"/>
    <property type="match status" value="1"/>
</dbReference>
<dbReference type="PROSITE" id="PS00475">
    <property type="entry name" value="RIBOSOMAL_L15"/>
    <property type="match status" value="1"/>
</dbReference>
<evidence type="ECO:0000255" key="1">
    <source>
        <dbReference type="HAMAP-Rule" id="MF_01341"/>
    </source>
</evidence>
<evidence type="ECO:0000256" key="2">
    <source>
        <dbReference type="SAM" id="MobiDB-lite"/>
    </source>
</evidence>
<evidence type="ECO:0000305" key="3"/>
<organism>
    <name type="scientific">Vibrio atlanticus (strain LGP32)</name>
    <name type="common">Vibrio splendidus (strain Mel32)</name>
    <dbReference type="NCBI Taxonomy" id="575788"/>
    <lineage>
        <taxon>Bacteria</taxon>
        <taxon>Pseudomonadati</taxon>
        <taxon>Pseudomonadota</taxon>
        <taxon>Gammaproteobacteria</taxon>
        <taxon>Vibrionales</taxon>
        <taxon>Vibrionaceae</taxon>
        <taxon>Vibrio</taxon>
    </lineage>
</organism>
<reference key="1">
    <citation type="submission" date="2009-02" db="EMBL/GenBank/DDBJ databases">
        <title>Vibrio splendidus str. LGP32 complete genome.</title>
        <authorList>
            <person name="Mazel D."/>
            <person name="Le Roux F."/>
        </authorList>
    </citation>
    <scope>NUCLEOTIDE SEQUENCE [LARGE SCALE GENOMIC DNA]</scope>
    <source>
        <strain>LGP32</strain>
    </source>
</reference>
<accession>B7VLD8</accession>
<protein>
    <recommendedName>
        <fullName evidence="1">Large ribosomal subunit protein uL15</fullName>
    </recommendedName>
    <alternativeName>
        <fullName evidence="3">50S ribosomal protein L15</fullName>
    </alternativeName>
</protein>